<organism>
    <name type="scientific">Aspergillus fumigatus (strain ATCC MYA-4609 / CBS 101355 / FGSC A1100 / Af293)</name>
    <name type="common">Neosartorya fumigata</name>
    <dbReference type="NCBI Taxonomy" id="330879"/>
    <lineage>
        <taxon>Eukaryota</taxon>
        <taxon>Fungi</taxon>
        <taxon>Dikarya</taxon>
        <taxon>Ascomycota</taxon>
        <taxon>Pezizomycotina</taxon>
        <taxon>Eurotiomycetes</taxon>
        <taxon>Eurotiomycetidae</taxon>
        <taxon>Eurotiales</taxon>
        <taxon>Aspergillaceae</taxon>
        <taxon>Aspergillus</taxon>
        <taxon>Aspergillus subgen. Fumigati</taxon>
    </lineage>
</organism>
<proteinExistence type="predicted"/>
<evidence type="ECO:0000255" key="1"/>
<protein>
    <recommendedName>
        <fullName>Uncharacterized protein AFUA_4G10530</fullName>
    </recommendedName>
</protein>
<reference key="1">
    <citation type="journal article" date="2005" name="Nature">
        <title>Genomic sequence of the pathogenic and allergenic filamentous fungus Aspergillus fumigatus.</title>
        <authorList>
            <person name="Nierman W.C."/>
            <person name="Pain A."/>
            <person name="Anderson M.J."/>
            <person name="Wortman J.R."/>
            <person name="Kim H.S."/>
            <person name="Arroyo J."/>
            <person name="Berriman M."/>
            <person name="Abe K."/>
            <person name="Archer D.B."/>
            <person name="Bermejo C."/>
            <person name="Bennett J.W."/>
            <person name="Bowyer P."/>
            <person name="Chen D."/>
            <person name="Collins M."/>
            <person name="Coulsen R."/>
            <person name="Davies R."/>
            <person name="Dyer P.S."/>
            <person name="Farman M.L."/>
            <person name="Fedorova N."/>
            <person name="Fedorova N.D."/>
            <person name="Feldblyum T.V."/>
            <person name="Fischer R."/>
            <person name="Fosker N."/>
            <person name="Fraser A."/>
            <person name="Garcia J.L."/>
            <person name="Garcia M.J."/>
            <person name="Goble A."/>
            <person name="Goldman G.H."/>
            <person name="Gomi K."/>
            <person name="Griffith-Jones S."/>
            <person name="Gwilliam R."/>
            <person name="Haas B.J."/>
            <person name="Haas H."/>
            <person name="Harris D.E."/>
            <person name="Horiuchi H."/>
            <person name="Huang J."/>
            <person name="Humphray S."/>
            <person name="Jimenez J."/>
            <person name="Keller N."/>
            <person name="Khouri H."/>
            <person name="Kitamoto K."/>
            <person name="Kobayashi T."/>
            <person name="Konzack S."/>
            <person name="Kulkarni R."/>
            <person name="Kumagai T."/>
            <person name="Lafton A."/>
            <person name="Latge J.-P."/>
            <person name="Li W."/>
            <person name="Lord A."/>
            <person name="Lu C."/>
            <person name="Majoros W.H."/>
            <person name="May G.S."/>
            <person name="Miller B.L."/>
            <person name="Mohamoud Y."/>
            <person name="Molina M."/>
            <person name="Monod M."/>
            <person name="Mouyna I."/>
            <person name="Mulligan S."/>
            <person name="Murphy L.D."/>
            <person name="O'Neil S."/>
            <person name="Paulsen I."/>
            <person name="Penalva M.A."/>
            <person name="Pertea M."/>
            <person name="Price C."/>
            <person name="Pritchard B.L."/>
            <person name="Quail M.A."/>
            <person name="Rabbinowitsch E."/>
            <person name="Rawlins N."/>
            <person name="Rajandream M.A."/>
            <person name="Reichard U."/>
            <person name="Renauld H."/>
            <person name="Robson G.D."/>
            <person name="Rodriguez de Cordoba S."/>
            <person name="Rodriguez-Pena J.M."/>
            <person name="Ronning C.M."/>
            <person name="Rutter S."/>
            <person name="Salzberg S.L."/>
            <person name="Sanchez M."/>
            <person name="Sanchez-Ferrero J.C."/>
            <person name="Saunders D."/>
            <person name="Seeger K."/>
            <person name="Squares R."/>
            <person name="Squares S."/>
            <person name="Takeuchi M."/>
            <person name="Tekaia F."/>
            <person name="Turner G."/>
            <person name="Vazquez de Aldana C.R."/>
            <person name="Weidman J."/>
            <person name="White O."/>
            <person name="Woodward J.R."/>
            <person name="Yu J.-H."/>
            <person name="Fraser C.M."/>
            <person name="Galagan J.E."/>
            <person name="Asai K."/>
            <person name="Machida M."/>
            <person name="Hall N."/>
            <person name="Barrell B.G."/>
            <person name="Denning D.W."/>
        </authorList>
    </citation>
    <scope>NUCLEOTIDE SEQUENCE [LARGE SCALE GENOMIC DNA]</scope>
    <source>
        <strain>ATCC MYA-4609 / CBS 101355 / FGSC A1100 / Af293</strain>
    </source>
</reference>
<sequence length="371" mass="41425">MIPPCDPIILENNPQFRKLYQHLTTNLLNADGSTRANDEQPARKAVLEELRGCRVRSANKKIKQQILQQLAFDADSGLPDDYRDPLAVITLYLESSPSRLDLEDGDDHRSSHDQALSLLASDIDAFYSIIPALVIPFSNALSSALEDLRAIANAGKSLDCAASAPAIPHTSTLPTRTRIRTSRNQFKAKSQAPLASQLRERLQKLRQIQLAQIPAARARMAITAAKVLETRAEILKHTVVLLERVKHGALSRATKSKAEHLALVAQGVEAKLRIIKLDTAAILYTPEVVTALDRYRQHLRETRERLEEKQGKLLEELKGYESMDSTETHELSARSSKEHFESGPMREIARRYGSLVKEIEAVKLEIQRISG</sequence>
<keyword id="KW-0175">Coiled coil</keyword>
<keyword id="KW-1185">Reference proteome</keyword>
<feature type="chain" id="PRO_0000160270" description="Uncharacterized protein AFUA_4G10530">
    <location>
        <begin position="1"/>
        <end position="371"/>
    </location>
</feature>
<feature type="coiled-coil region" evidence="1">
    <location>
        <begin position="287"/>
        <end position="323"/>
    </location>
</feature>
<accession>Q4WPU9</accession>
<dbReference type="EMBL" id="AAHF01000005">
    <property type="protein sequence ID" value="EAL89735.2"/>
    <property type="molecule type" value="Genomic_DNA"/>
</dbReference>
<dbReference type="RefSeq" id="XP_751773.2">
    <property type="nucleotide sequence ID" value="XM_746680.2"/>
</dbReference>
<dbReference type="SMR" id="Q4WPU9"/>
<dbReference type="STRING" id="330879.Q4WPU9"/>
<dbReference type="EnsemblFungi" id="EAL89735">
    <property type="protein sequence ID" value="EAL89735"/>
    <property type="gene ID" value="AFUA_4G10530"/>
</dbReference>
<dbReference type="GeneID" id="3509354"/>
<dbReference type="KEGG" id="afm:AFUA_4G10530"/>
<dbReference type="VEuPathDB" id="FungiDB:Afu4g10530"/>
<dbReference type="eggNOG" id="ENOG502S7PS">
    <property type="taxonomic scope" value="Eukaryota"/>
</dbReference>
<dbReference type="HOGENOM" id="CLU_054584_1_0_1"/>
<dbReference type="InParanoid" id="Q4WPU9"/>
<dbReference type="OMA" id="SNLRTWA"/>
<dbReference type="OrthoDB" id="66964at2759"/>
<dbReference type="Proteomes" id="UP000002530">
    <property type="component" value="Chromosome 4"/>
</dbReference>
<gene>
    <name type="ORF">AFUA_4G10530</name>
</gene>
<name>YA530_ASPFU</name>